<feature type="chain" id="PRO_0000287153" description="Proton-coupled antiporter flippase LtaA">
    <location>
        <begin position="1"/>
        <end position="396"/>
    </location>
</feature>
<feature type="transmembrane region" description="Helical" evidence="2">
    <location>
        <begin position="15"/>
        <end position="34"/>
    </location>
</feature>
<feature type="transmembrane region" description="Helical" evidence="2">
    <location>
        <begin position="46"/>
        <end position="73"/>
    </location>
</feature>
<feature type="transmembrane region" description="Helical" evidence="2">
    <location>
        <begin position="80"/>
        <end position="99"/>
    </location>
</feature>
<feature type="transmembrane region" description="Helical" evidence="2">
    <location>
        <begin position="105"/>
        <end position="126"/>
    </location>
</feature>
<feature type="transmembrane region" description="Helical" evidence="2">
    <location>
        <begin position="138"/>
        <end position="159"/>
    </location>
</feature>
<feature type="transmembrane region" description="Helical" evidence="2">
    <location>
        <begin position="165"/>
        <end position="184"/>
    </location>
</feature>
<feature type="transmembrane region" description="Helical" evidence="2">
    <location>
        <begin position="211"/>
        <end position="231"/>
    </location>
</feature>
<feature type="transmembrane region" description="Helical" evidence="2">
    <location>
        <begin position="243"/>
        <end position="263"/>
    </location>
</feature>
<feature type="transmembrane region" description="Helical" evidence="2">
    <location>
        <begin position="275"/>
        <end position="297"/>
    </location>
</feature>
<feature type="transmembrane region" description="Helical" evidence="2">
    <location>
        <begin position="303"/>
        <end position="326"/>
    </location>
</feature>
<feature type="transmembrane region" description="Helical" evidence="2">
    <location>
        <begin position="338"/>
        <end position="358"/>
    </location>
</feature>
<feature type="transmembrane region" description="Helical" evidence="2">
    <location>
        <begin position="370"/>
        <end position="390"/>
    </location>
</feature>
<keyword id="KW-0050">Antiport</keyword>
<keyword id="KW-1003">Cell membrane</keyword>
<keyword id="KW-0445">Lipid transport</keyword>
<keyword id="KW-0472">Membrane</keyword>
<keyword id="KW-0812">Transmembrane</keyword>
<keyword id="KW-1133">Transmembrane helix</keyword>
<keyword id="KW-0813">Transport</keyword>
<keyword id="KW-0843">Virulence</keyword>
<protein>
    <recommendedName>
        <fullName evidence="1">Proton-coupled antiporter flippase LtaA</fullName>
    </recommendedName>
    <alternativeName>
        <fullName evidence="1">Lipoteichoic acid protein A</fullName>
    </alternativeName>
</protein>
<organism>
    <name type="scientific">Staphylococcus aureus (strain COL)</name>
    <dbReference type="NCBI Taxonomy" id="93062"/>
    <lineage>
        <taxon>Bacteria</taxon>
        <taxon>Bacillati</taxon>
        <taxon>Bacillota</taxon>
        <taxon>Bacilli</taxon>
        <taxon>Bacillales</taxon>
        <taxon>Staphylococcaceae</taxon>
        <taxon>Staphylococcus</taxon>
    </lineage>
</organism>
<evidence type="ECO:0000250" key="1">
    <source>
        <dbReference type="UniProtKB" id="Q2FZP8"/>
    </source>
</evidence>
<evidence type="ECO:0000255" key="2"/>
<evidence type="ECO:0000305" key="3"/>
<name>LTAA_STAAC</name>
<sequence length="396" mass="44618">MQDSSLNNYANHKNFILMLIILFLMEFARGMYILSYINFLPTVTSIAVAITSLAFSIHFIADASTNFVIGFLLKKFGTKIVLTTGFILAFTSLFLVIWFPASPFVIIFSAMMLGIAVSPIWVIMLSSVEEDKRGKQMGYVYFSWLLGLLVGMVFMNLLIKVHPTRFAFMMSLVVLIAWILYYFVDVKLTNYNTRPVKAQLRQIVDVTKRHLLLFPGILLQGAAIAALVPILPTYATKVINVSTIEYTVAIIIGGIGCAVSMLFLSKLIDNRSRNFMYGVILSGFILYMILIFTLSMIVNIHILWIIALAIGLMYGILLPAWNTFMARFIKSDEQEETWGVFNSIQGFGSMIGPLFGGLITQFTNNLNNTFYFSALIFLVLAVFYGSYFIVNREKAK</sequence>
<comment type="function">
    <text evidence="1">Proton-coupled antiporter flippase that catalyzes the translocation, from the inner to the outer leaflet of the cell membrane, of the lipid-linked disaccharide (anchor-LLD) that anchors lipoteichoic acids (LTA) to the cell membrane.</text>
</comment>
<comment type="pathway">
    <text evidence="1">Cell wall biogenesis; lipoteichoic acid biosynthesis.</text>
</comment>
<comment type="subcellular location">
    <subcellularLocation>
        <location evidence="1">Cell membrane</location>
        <topology evidence="1">Multi-pass membrane protein</topology>
    </subcellularLocation>
</comment>
<comment type="similarity">
    <text evidence="3">Belongs to the major facilitator superfamily. LtaA family.</text>
</comment>
<proteinExistence type="inferred from homology"/>
<reference key="1">
    <citation type="journal article" date="2005" name="J. Bacteriol.">
        <title>Insights on evolution of virulence and resistance from the complete genome analysis of an early methicillin-resistant Staphylococcus aureus strain and a biofilm-producing methicillin-resistant Staphylococcus epidermidis strain.</title>
        <authorList>
            <person name="Gill S.R."/>
            <person name="Fouts D.E."/>
            <person name="Archer G.L."/>
            <person name="Mongodin E.F."/>
            <person name="DeBoy R.T."/>
            <person name="Ravel J."/>
            <person name="Paulsen I.T."/>
            <person name="Kolonay J.F."/>
            <person name="Brinkac L.M."/>
            <person name="Beanan M.J."/>
            <person name="Dodson R.J."/>
            <person name="Daugherty S.C."/>
            <person name="Madupu R."/>
            <person name="Angiuoli S.V."/>
            <person name="Durkin A.S."/>
            <person name="Haft D.H."/>
            <person name="Vamathevan J.J."/>
            <person name="Khouri H."/>
            <person name="Utterback T.R."/>
            <person name="Lee C."/>
            <person name="Dimitrov G."/>
            <person name="Jiang L."/>
            <person name="Qin H."/>
            <person name="Weidman J."/>
            <person name="Tran K."/>
            <person name="Kang K.H."/>
            <person name="Hance I.R."/>
            <person name="Nelson K.E."/>
            <person name="Fraser C.M."/>
        </authorList>
    </citation>
    <scope>NUCLEOTIDE SEQUENCE [LARGE SCALE GENOMIC DNA]</scope>
    <source>
        <strain>COL</strain>
    </source>
</reference>
<gene>
    <name type="primary">ltaA</name>
    <name type="ordered locus">SACOL1021</name>
</gene>
<accession>Q5HH70</accession>
<dbReference type="EMBL" id="CP000046">
    <property type="protein sequence ID" value="AAW36487.1"/>
    <property type="molecule type" value="Genomic_DNA"/>
</dbReference>
<dbReference type="RefSeq" id="WP_001154222.1">
    <property type="nucleotide sequence ID" value="NZ_JBGOFO010000002.1"/>
</dbReference>
<dbReference type="SMR" id="Q5HH70"/>
<dbReference type="KEGG" id="sac:SACOL1021"/>
<dbReference type="HOGENOM" id="CLU_054518_0_0_9"/>
<dbReference type="UniPathway" id="UPA00556"/>
<dbReference type="Proteomes" id="UP000000530">
    <property type="component" value="Chromosome"/>
</dbReference>
<dbReference type="GO" id="GO:0005886">
    <property type="term" value="C:plasma membrane"/>
    <property type="evidence" value="ECO:0007669"/>
    <property type="project" value="UniProtKB-SubCell"/>
</dbReference>
<dbReference type="GO" id="GO:0015297">
    <property type="term" value="F:antiporter activity"/>
    <property type="evidence" value="ECO:0007669"/>
    <property type="project" value="UniProtKB-KW"/>
</dbReference>
<dbReference type="GO" id="GO:0006869">
    <property type="term" value="P:lipid transport"/>
    <property type="evidence" value="ECO:0007669"/>
    <property type="project" value="UniProtKB-KW"/>
</dbReference>
<dbReference type="GO" id="GO:0070395">
    <property type="term" value="P:lipoteichoic acid biosynthetic process"/>
    <property type="evidence" value="ECO:0007669"/>
    <property type="project" value="UniProtKB-UniPathway"/>
</dbReference>
<dbReference type="CDD" id="cd17325">
    <property type="entry name" value="MFS_MdtG_SLC18_like"/>
    <property type="match status" value="1"/>
</dbReference>
<dbReference type="Gene3D" id="1.20.1250.20">
    <property type="entry name" value="MFS general substrate transporter like domains"/>
    <property type="match status" value="2"/>
</dbReference>
<dbReference type="InterPro" id="IPR050495">
    <property type="entry name" value="ATG22/LtaA_families"/>
</dbReference>
<dbReference type="InterPro" id="IPR011701">
    <property type="entry name" value="MFS"/>
</dbReference>
<dbReference type="InterPro" id="IPR020846">
    <property type="entry name" value="MFS_dom"/>
</dbReference>
<dbReference type="InterPro" id="IPR036259">
    <property type="entry name" value="MFS_trans_sf"/>
</dbReference>
<dbReference type="NCBIfam" id="NF047396">
    <property type="entry name" value="MFS_flip_LtaA"/>
    <property type="match status" value="1"/>
</dbReference>
<dbReference type="PANTHER" id="PTHR23519">
    <property type="entry name" value="AUTOPHAGY-RELATED PROTEIN 22"/>
    <property type="match status" value="1"/>
</dbReference>
<dbReference type="PANTHER" id="PTHR23519:SF1">
    <property type="entry name" value="AUTOPHAGY-RELATED PROTEIN 22"/>
    <property type="match status" value="1"/>
</dbReference>
<dbReference type="Pfam" id="PF07690">
    <property type="entry name" value="MFS_1"/>
    <property type="match status" value="1"/>
</dbReference>
<dbReference type="SUPFAM" id="SSF103473">
    <property type="entry name" value="MFS general substrate transporter"/>
    <property type="match status" value="1"/>
</dbReference>
<dbReference type="PROSITE" id="PS50850">
    <property type="entry name" value="MFS"/>
    <property type="match status" value="1"/>
</dbReference>